<evidence type="ECO:0000255" key="1">
    <source>
        <dbReference type="HAMAP-Rule" id="MF_00456"/>
    </source>
</evidence>
<evidence type="ECO:0000305" key="2"/>
<accession>Q92LF7</accession>
<comment type="function">
    <text evidence="1">Catalyzes the transfer of a phosphate group to glutamate to form L-glutamate 5-phosphate.</text>
</comment>
<comment type="catalytic activity">
    <reaction evidence="1">
        <text>L-glutamate + ATP = L-glutamyl 5-phosphate + ADP</text>
        <dbReference type="Rhea" id="RHEA:14877"/>
        <dbReference type="ChEBI" id="CHEBI:29985"/>
        <dbReference type="ChEBI" id="CHEBI:30616"/>
        <dbReference type="ChEBI" id="CHEBI:58274"/>
        <dbReference type="ChEBI" id="CHEBI:456216"/>
        <dbReference type="EC" id="2.7.2.11"/>
    </reaction>
</comment>
<comment type="pathway">
    <text evidence="1">Amino-acid biosynthesis; L-proline biosynthesis; L-glutamate 5-semialdehyde from L-glutamate: step 1/2.</text>
</comment>
<comment type="subcellular location">
    <subcellularLocation>
        <location evidence="1">Cytoplasm</location>
    </subcellularLocation>
</comment>
<comment type="similarity">
    <text evidence="1">Belongs to the glutamate 5-kinase family.</text>
</comment>
<comment type="sequence caution" evidence="2">
    <conflict type="erroneous initiation">
        <sequence resource="EMBL-CDS" id="CAC47685"/>
    </conflict>
</comment>
<keyword id="KW-0028">Amino-acid biosynthesis</keyword>
<keyword id="KW-0067">ATP-binding</keyword>
<keyword id="KW-0963">Cytoplasm</keyword>
<keyword id="KW-0418">Kinase</keyword>
<keyword id="KW-0547">Nucleotide-binding</keyword>
<keyword id="KW-0641">Proline biosynthesis</keyword>
<keyword id="KW-1185">Reference proteome</keyword>
<keyword id="KW-0808">Transferase</keyword>
<sequence>MEDKFDLSSARLVVVKIGSTLVLDRETSGIRSSWLESLTEDVSRLLTRGQQVVLVSSGAVAIGSTIVDRLATYSQVSHKQAAAALGQVQLTHAYSESLKRHGLQVAQLLMGRGDLVDPAHRLNTRAVLLRLIDLGAVPLVNENDTTATCGTRVGDNDRLAAWIAEIINADLLILLSNVDGLFMKDPRNNPLTPMLTEVESITREIEAMATQSVDPYSSGGMISKIEAGKIAMNAGCRMIIANGTRSHPLYAIESGGPSTHFIPVARDRV</sequence>
<organism>
    <name type="scientific">Rhizobium meliloti (strain 1021)</name>
    <name type="common">Ensifer meliloti</name>
    <name type="synonym">Sinorhizobium meliloti</name>
    <dbReference type="NCBI Taxonomy" id="266834"/>
    <lineage>
        <taxon>Bacteria</taxon>
        <taxon>Pseudomonadati</taxon>
        <taxon>Pseudomonadota</taxon>
        <taxon>Alphaproteobacteria</taxon>
        <taxon>Hyphomicrobiales</taxon>
        <taxon>Rhizobiaceae</taxon>
        <taxon>Sinorhizobium/Ensifer group</taxon>
        <taxon>Sinorhizobium</taxon>
    </lineage>
</organism>
<reference key="1">
    <citation type="journal article" date="2001" name="Proc. Natl. Acad. Sci. U.S.A.">
        <title>Analysis of the chromosome sequence of the legume symbiont Sinorhizobium meliloti strain 1021.</title>
        <authorList>
            <person name="Capela D."/>
            <person name="Barloy-Hubler F."/>
            <person name="Gouzy J."/>
            <person name="Bothe G."/>
            <person name="Ampe F."/>
            <person name="Batut J."/>
            <person name="Boistard P."/>
            <person name="Becker A."/>
            <person name="Boutry M."/>
            <person name="Cadieu E."/>
            <person name="Dreano S."/>
            <person name="Gloux S."/>
            <person name="Godrie T."/>
            <person name="Goffeau A."/>
            <person name="Kahn D."/>
            <person name="Kiss E."/>
            <person name="Lelaure V."/>
            <person name="Masuy D."/>
            <person name="Pohl T."/>
            <person name="Portetelle D."/>
            <person name="Puehler A."/>
            <person name="Purnelle B."/>
            <person name="Ramsperger U."/>
            <person name="Renard C."/>
            <person name="Thebault P."/>
            <person name="Vandenbol M."/>
            <person name="Weidner S."/>
            <person name="Galibert F."/>
        </authorList>
    </citation>
    <scope>NUCLEOTIDE SEQUENCE [LARGE SCALE GENOMIC DNA]</scope>
    <source>
        <strain>1021</strain>
    </source>
</reference>
<reference key="2">
    <citation type="journal article" date="2001" name="Science">
        <title>The composite genome of the legume symbiont Sinorhizobium meliloti.</title>
        <authorList>
            <person name="Galibert F."/>
            <person name="Finan T.M."/>
            <person name="Long S.R."/>
            <person name="Puehler A."/>
            <person name="Abola P."/>
            <person name="Ampe F."/>
            <person name="Barloy-Hubler F."/>
            <person name="Barnett M.J."/>
            <person name="Becker A."/>
            <person name="Boistard P."/>
            <person name="Bothe G."/>
            <person name="Boutry M."/>
            <person name="Bowser L."/>
            <person name="Buhrmester J."/>
            <person name="Cadieu E."/>
            <person name="Capela D."/>
            <person name="Chain P."/>
            <person name="Cowie A."/>
            <person name="Davis R.W."/>
            <person name="Dreano S."/>
            <person name="Federspiel N.A."/>
            <person name="Fisher R.F."/>
            <person name="Gloux S."/>
            <person name="Godrie T."/>
            <person name="Goffeau A."/>
            <person name="Golding B."/>
            <person name="Gouzy J."/>
            <person name="Gurjal M."/>
            <person name="Hernandez-Lucas I."/>
            <person name="Hong A."/>
            <person name="Huizar L."/>
            <person name="Hyman R.W."/>
            <person name="Jones T."/>
            <person name="Kahn D."/>
            <person name="Kahn M.L."/>
            <person name="Kalman S."/>
            <person name="Keating D.H."/>
            <person name="Kiss E."/>
            <person name="Komp C."/>
            <person name="Lelaure V."/>
            <person name="Masuy D."/>
            <person name="Palm C."/>
            <person name="Peck M.C."/>
            <person name="Pohl T.M."/>
            <person name="Portetelle D."/>
            <person name="Purnelle B."/>
            <person name="Ramsperger U."/>
            <person name="Surzycki R."/>
            <person name="Thebault P."/>
            <person name="Vandenbol M."/>
            <person name="Vorhoelter F.J."/>
            <person name="Weidner S."/>
            <person name="Wells D.H."/>
            <person name="Wong K."/>
            <person name="Yeh K.-C."/>
            <person name="Batut J."/>
        </authorList>
    </citation>
    <scope>NUCLEOTIDE SEQUENCE [LARGE SCALE GENOMIC DNA]</scope>
    <source>
        <strain>1021</strain>
    </source>
</reference>
<name>PROB2_RHIME</name>
<feature type="chain" id="PRO_0000109716" description="Glutamate 5-kinase 2">
    <location>
        <begin position="1"/>
        <end position="269"/>
    </location>
</feature>
<feature type="binding site" evidence="1">
    <location>
        <position position="16"/>
    </location>
    <ligand>
        <name>ATP</name>
        <dbReference type="ChEBI" id="CHEBI:30616"/>
    </ligand>
</feature>
<feature type="binding site" evidence="1">
    <location>
        <position position="57"/>
    </location>
    <ligand>
        <name>substrate</name>
    </ligand>
</feature>
<feature type="binding site" evidence="1">
    <location>
        <position position="144"/>
    </location>
    <ligand>
        <name>substrate</name>
    </ligand>
</feature>
<feature type="binding site" evidence="1">
    <location>
        <position position="156"/>
    </location>
    <ligand>
        <name>substrate</name>
    </ligand>
</feature>
<feature type="binding site" evidence="1">
    <location>
        <begin position="218"/>
        <end position="224"/>
    </location>
    <ligand>
        <name>ATP</name>
        <dbReference type="ChEBI" id="CHEBI:30616"/>
    </ligand>
</feature>
<dbReference type="EC" id="2.7.2.11" evidence="1"/>
<dbReference type="EMBL" id="AL591688">
    <property type="protein sequence ID" value="CAC47685.1"/>
    <property type="status" value="ALT_INIT"/>
    <property type="molecule type" value="Genomic_DNA"/>
</dbReference>
<dbReference type="RefSeq" id="NP_387212.1">
    <property type="nucleotide sequence ID" value="NC_003047.1"/>
</dbReference>
<dbReference type="SMR" id="Q92LF7"/>
<dbReference type="EnsemblBacteria" id="CAC47685">
    <property type="protein sequence ID" value="CAC47685"/>
    <property type="gene ID" value="SMc03252"/>
</dbReference>
<dbReference type="KEGG" id="sme:SMc03252"/>
<dbReference type="PATRIC" id="fig|266834.11.peg.4643"/>
<dbReference type="eggNOG" id="COG0263">
    <property type="taxonomic scope" value="Bacteria"/>
</dbReference>
<dbReference type="HOGENOM" id="CLU_025400_0_2_5"/>
<dbReference type="OrthoDB" id="9804434at2"/>
<dbReference type="UniPathway" id="UPA00098">
    <property type="reaction ID" value="UER00359"/>
</dbReference>
<dbReference type="Proteomes" id="UP000001976">
    <property type="component" value="Chromosome"/>
</dbReference>
<dbReference type="GO" id="GO:0005829">
    <property type="term" value="C:cytosol"/>
    <property type="evidence" value="ECO:0007669"/>
    <property type="project" value="TreeGrafter"/>
</dbReference>
<dbReference type="GO" id="GO:0005524">
    <property type="term" value="F:ATP binding"/>
    <property type="evidence" value="ECO:0007669"/>
    <property type="project" value="UniProtKB-KW"/>
</dbReference>
<dbReference type="GO" id="GO:0004349">
    <property type="term" value="F:glutamate 5-kinase activity"/>
    <property type="evidence" value="ECO:0007669"/>
    <property type="project" value="UniProtKB-UniRule"/>
</dbReference>
<dbReference type="GO" id="GO:0055129">
    <property type="term" value="P:L-proline biosynthetic process"/>
    <property type="evidence" value="ECO:0007669"/>
    <property type="project" value="UniProtKB-UniRule"/>
</dbReference>
<dbReference type="CDD" id="cd04242">
    <property type="entry name" value="AAK_G5K_ProB"/>
    <property type="match status" value="1"/>
</dbReference>
<dbReference type="FunFam" id="3.40.1160.10:FF:000006">
    <property type="entry name" value="Glutamate 5-kinase"/>
    <property type="match status" value="1"/>
</dbReference>
<dbReference type="Gene3D" id="3.40.1160.10">
    <property type="entry name" value="Acetylglutamate kinase-like"/>
    <property type="match status" value="1"/>
</dbReference>
<dbReference type="HAMAP" id="MF_00456">
    <property type="entry name" value="ProB"/>
    <property type="match status" value="1"/>
</dbReference>
<dbReference type="InterPro" id="IPR036393">
    <property type="entry name" value="AceGlu_kinase-like_sf"/>
</dbReference>
<dbReference type="InterPro" id="IPR001048">
    <property type="entry name" value="Asp/Glu/Uridylate_kinase"/>
</dbReference>
<dbReference type="InterPro" id="IPR041739">
    <property type="entry name" value="G5K_ProB"/>
</dbReference>
<dbReference type="InterPro" id="IPR001057">
    <property type="entry name" value="Glu/AcGlu_kinase"/>
</dbReference>
<dbReference type="InterPro" id="IPR011529">
    <property type="entry name" value="Glu_5kinase"/>
</dbReference>
<dbReference type="InterPro" id="IPR005715">
    <property type="entry name" value="Glu_5kinase/COase_Synthase"/>
</dbReference>
<dbReference type="InterPro" id="IPR019797">
    <property type="entry name" value="Glutamate_5-kinase_CS"/>
</dbReference>
<dbReference type="NCBIfam" id="TIGR01027">
    <property type="entry name" value="proB"/>
    <property type="match status" value="1"/>
</dbReference>
<dbReference type="PANTHER" id="PTHR43654">
    <property type="entry name" value="GLUTAMATE 5-KINASE"/>
    <property type="match status" value="1"/>
</dbReference>
<dbReference type="PANTHER" id="PTHR43654:SF1">
    <property type="entry name" value="ISOPENTENYL PHOSPHATE KINASE"/>
    <property type="match status" value="1"/>
</dbReference>
<dbReference type="Pfam" id="PF00696">
    <property type="entry name" value="AA_kinase"/>
    <property type="match status" value="1"/>
</dbReference>
<dbReference type="PIRSF" id="PIRSF000729">
    <property type="entry name" value="GK"/>
    <property type="match status" value="1"/>
</dbReference>
<dbReference type="PRINTS" id="PR00474">
    <property type="entry name" value="GLU5KINASE"/>
</dbReference>
<dbReference type="SUPFAM" id="SSF53633">
    <property type="entry name" value="Carbamate kinase-like"/>
    <property type="match status" value="1"/>
</dbReference>
<dbReference type="PROSITE" id="PS00902">
    <property type="entry name" value="GLUTAMATE_5_KINASE"/>
    <property type="match status" value="1"/>
</dbReference>
<proteinExistence type="inferred from homology"/>
<gene>
    <name evidence="1" type="primary">proB2</name>
    <name type="ordered locus">R03106</name>
    <name type="ORF">SMc03252</name>
</gene>
<protein>
    <recommendedName>
        <fullName evidence="1">Glutamate 5-kinase 2</fullName>
        <ecNumber evidence="1">2.7.2.11</ecNumber>
    </recommendedName>
    <alternativeName>
        <fullName evidence="1">Gamma-glutamyl kinase 2</fullName>
        <shortName evidence="1">GK 2</shortName>
    </alternativeName>
</protein>